<feature type="chain" id="PRO_1000125082" description="Phosphoenolpyruvate carboxykinase (ATP)">
    <location>
        <begin position="1"/>
        <end position="513"/>
    </location>
</feature>
<feature type="binding site" evidence="1">
    <location>
        <position position="45"/>
    </location>
    <ligand>
        <name>substrate</name>
    </ligand>
</feature>
<feature type="binding site" evidence="1">
    <location>
        <position position="179"/>
    </location>
    <ligand>
        <name>substrate</name>
    </ligand>
</feature>
<feature type="binding site" evidence="1">
    <location>
        <position position="185"/>
    </location>
    <ligand>
        <name>ATP</name>
        <dbReference type="ChEBI" id="CHEBI:30616"/>
    </ligand>
</feature>
<feature type="binding site" evidence="1">
    <location>
        <position position="185"/>
    </location>
    <ligand>
        <name>Mn(2+)</name>
        <dbReference type="ChEBI" id="CHEBI:29035"/>
    </ligand>
</feature>
<feature type="binding site" evidence="1">
    <location>
        <position position="185"/>
    </location>
    <ligand>
        <name>substrate</name>
    </ligand>
</feature>
<feature type="binding site" evidence="1">
    <location>
        <position position="204"/>
    </location>
    <ligand>
        <name>ATP</name>
        <dbReference type="ChEBI" id="CHEBI:30616"/>
    </ligand>
</feature>
<feature type="binding site" evidence="1">
    <location>
        <position position="204"/>
    </location>
    <ligand>
        <name>Mn(2+)</name>
        <dbReference type="ChEBI" id="CHEBI:29035"/>
    </ligand>
</feature>
<feature type="binding site" evidence="1">
    <location>
        <begin position="220"/>
        <end position="228"/>
    </location>
    <ligand>
        <name>ATP</name>
        <dbReference type="ChEBI" id="CHEBI:30616"/>
    </ligand>
</feature>
<feature type="binding site" evidence="1">
    <location>
        <position position="241"/>
    </location>
    <ligand>
        <name>Mn(2+)</name>
        <dbReference type="ChEBI" id="CHEBI:29035"/>
    </ligand>
</feature>
<feature type="binding site" evidence="1">
    <location>
        <position position="269"/>
    </location>
    <ligand>
        <name>ATP</name>
        <dbReference type="ChEBI" id="CHEBI:30616"/>
    </ligand>
</feature>
<feature type="binding site" evidence="1">
    <location>
        <position position="305"/>
    </location>
    <ligand>
        <name>ATP</name>
        <dbReference type="ChEBI" id="CHEBI:30616"/>
    </ligand>
</feature>
<feature type="binding site" evidence="1">
    <location>
        <position position="305"/>
    </location>
    <ligand>
        <name>substrate</name>
    </ligand>
</feature>
<feature type="binding site" evidence="1">
    <location>
        <position position="431"/>
    </location>
    <ligand>
        <name>ATP</name>
        <dbReference type="ChEBI" id="CHEBI:30616"/>
    </ligand>
</feature>
<evidence type="ECO:0000255" key="1">
    <source>
        <dbReference type="HAMAP-Rule" id="MF_00453"/>
    </source>
</evidence>
<organism>
    <name type="scientific">Pseudomonas putida (strain W619)</name>
    <dbReference type="NCBI Taxonomy" id="390235"/>
    <lineage>
        <taxon>Bacteria</taxon>
        <taxon>Pseudomonadati</taxon>
        <taxon>Pseudomonadota</taxon>
        <taxon>Gammaproteobacteria</taxon>
        <taxon>Pseudomonadales</taxon>
        <taxon>Pseudomonadaceae</taxon>
        <taxon>Pseudomonas</taxon>
    </lineage>
</organism>
<dbReference type="EC" id="4.1.1.49" evidence="1"/>
<dbReference type="EMBL" id="CP000949">
    <property type="protein sequence ID" value="ACA75435.1"/>
    <property type="molecule type" value="Genomic_DNA"/>
</dbReference>
<dbReference type="SMR" id="B1JET1"/>
<dbReference type="STRING" id="390235.PputW619_4959"/>
<dbReference type="KEGG" id="ppw:PputW619_4959"/>
<dbReference type="eggNOG" id="COG1866">
    <property type="taxonomic scope" value="Bacteria"/>
</dbReference>
<dbReference type="HOGENOM" id="CLU_018247_0_1_6"/>
<dbReference type="OrthoDB" id="9806325at2"/>
<dbReference type="UniPathway" id="UPA00138"/>
<dbReference type="GO" id="GO:0005829">
    <property type="term" value="C:cytosol"/>
    <property type="evidence" value="ECO:0007669"/>
    <property type="project" value="TreeGrafter"/>
</dbReference>
<dbReference type="GO" id="GO:0005524">
    <property type="term" value="F:ATP binding"/>
    <property type="evidence" value="ECO:0007669"/>
    <property type="project" value="UniProtKB-UniRule"/>
</dbReference>
<dbReference type="GO" id="GO:0046872">
    <property type="term" value="F:metal ion binding"/>
    <property type="evidence" value="ECO:0007669"/>
    <property type="project" value="UniProtKB-KW"/>
</dbReference>
<dbReference type="GO" id="GO:0004612">
    <property type="term" value="F:phosphoenolpyruvate carboxykinase (ATP) activity"/>
    <property type="evidence" value="ECO:0007669"/>
    <property type="project" value="UniProtKB-UniRule"/>
</dbReference>
<dbReference type="GO" id="GO:0006094">
    <property type="term" value="P:gluconeogenesis"/>
    <property type="evidence" value="ECO:0007669"/>
    <property type="project" value="UniProtKB-UniRule"/>
</dbReference>
<dbReference type="Gene3D" id="3.90.228.20">
    <property type="match status" value="1"/>
</dbReference>
<dbReference type="Gene3D" id="3.40.449.10">
    <property type="entry name" value="Phosphoenolpyruvate Carboxykinase, domain 1"/>
    <property type="match status" value="1"/>
</dbReference>
<dbReference type="Gene3D" id="2.170.8.10">
    <property type="entry name" value="Phosphoenolpyruvate Carboxykinase, domain 2"/>
    <property type="match status" value="1"/>
</dbReference>
<dbReference type="HAMAP" id="MF_00453">
    <property type="entry name" value="PEPCK_ATP"/>
    <property type="match status" value="1"/>
</dbReference>
<dbReference type="InterPro" id="IPR001272">
    <property type="entry name" value="PEP_carboxykinase_ATP"/>
</dbReference>
<dbReference type="InterPro" id="IPR013035">
    <property type="entry name" value="PEP_carboxykinase_C"/>
</dbReference>
<dbReference type="InterPro" id="IPR008210">
    <property type="entry name" value="PEP_carboxykinase_N"/>
</dbReference>
<dbReference type="InterPro" id="IPR015994">
    <property type="entry name" value="PEPCK_ATP_CS"/>
</dbReference>
<dbReference type="NCBIfam" id="TIGR00224">
    <property type="entry name" value="pckA"/>
    <property type="match status" value="1"/>
</dbReference>
<dbReference type="NCBIfam" id="NF006820">
    <property type="entry name" value="PRK09344.1-2"/>
    <property type="match status" value="1"/>
</dbReference>
<dbReference type="NCBIfam" id="NF006821">
    <property type="entry name" value="PRK09344.1-3"/>
    <property type="match status" value="1"/>
</dbReference>
<dbReference type="NCBIfam" id="NF006823">
    <property type="entry name" value="PRK09344.1-5"/>
    <property type="match status" value="1"/>
</dbReference>
<dbReference type="PANTHER" id="PTHR30031:SF0">
    <property type="entry name" value="PHOSPHOENOLPYRUVATE CARBOXYKINASE (ATP)"/>
    <property type="match status" value="1"/>
</dbReference>
<dbReference type="PANTHER" id="PTHR30031">
    <property type="entry name" value="PHOSPHOENOLPYRUVATE CARBOXYKINASE ATP"/>
    <property type="match status" value="1"/>
</dbReference>
<dbReference type="Pfam" id="PF01293">
    <property type="entry name" value="PEPCK_ATP"/>
    <property type="match status" value="1"/>
</dbReference>
<dbReference type="PIRSF" id="PIRSF006294">
    <property type="entry name" value="PEP_crbxkin"/>
    <property type="match status" value="1"/>
</dbReference>
<dbReference type="SUPFAM" id="SSF68923">
    <property type="entry name" value="PEP carboxykinase N-terminal domain"/>
    <property type="match status" value="1"/>
</dbReference>
<dbReference type="SUPFAM" id="SSF53795">
    <property type="entry name" value="PEP carboxykinase-like"/>
    <property type="match status" value="1"/>
</dbReference>
<dbReference type="PROSITE" id="PS00532">
    <property type="entry name" value="PEPCK_ATP"/>
    <property type="match status" value="1"/>
</dbReference>
<sequence length="513" mass="55441">MTQANNTVYTDLSVDELVKEALQRGEGVLADTGALVVETGHRTGRSPADRFIVEEPSTQDAIAWGPINRKFPADKFDALWDRVEAFNNAQDHFVSYVHVGAAAEHYLPVKMTTQTAWQNLFGRCLFINPEQFNPAGRDQWQVLNVANFECVPERDGTNSDGCVIINFAAKKVLIAGMRYAGEMKKAMFSVQNFLLPAADVLPMHCAANIGEEGDVTLFFGLSGTGKTTLSADESRYLIGDDEHGWGEGVVFNMEGGCYAKCIDLSEKNEPVIWKAIKHGAVLENVVLDGNKHADYADVSLTQNSRAAYPLEHVAKRAEANLGGEPNAVIFLTCDLTGVLPPVSILNNEQAAYHFLSGYTALVGSTEMGSGGGIKSTFSTCFGAPFFPRPAGEYAELLIKRINAFGSKVYLVNTGWTGGGYGVGKRFSIPTTRGVIAAIQSGALVGTETEHLDIINLDVPKAVPGVETELLNPRNTWADKAAYDEAAKGLAKLFTENFKKFEVSDAIKAAGPQL</sequence>
<reference key="1">
    <citation type="submission" date="2008-02" db="EMBL/GenBank/DDBJ databases">
        <title>Complete sequence of Pseudomonas putida W619.</title>
        <authorList>
            <person name="Copeland A."/>
            <person name="Lucas S."/>
            <person name="Lapidus A."/>
            <person name="Barry K."/>
            <person name="Detter J.C."/>
            <person name="Glavina del Rio T."/>
            <person name="Dalin E."/>
            <person name="Tice H."/>
            <person name="Pitluck S."/>
            <person name="Chain P."/>
            <person name="Malfatti S."/>
            <person name="Shin M."/>
            <person name="Vergez L."/>
            <person name="Schmutz J."/>
            <person name="Larimer F."/>
            <person name="Land M."/>
            <person name="Hauser L."/>
            <person name="Kyrpides N."/>
            <person name="Kim E."/>
            <person name="Taghavi S."/>
            <person name="Vangronsveld D."/>
            <person name="van der Lelie D."/>
            <person name="Richardson P."/>
        </authorList>
    </citation>
    <scope>NUCLEOTIDE SEQUENCE [LARGE SCALE GENOMIC DNA]</scope>
    <source>
        <strain>W619</strain>
    </source>
</reference>
<comment type="function">
    <text evidence="1">Involved in the gluconeogenesis. Catalyzes the conversion of oxaloacetate (OAA) to phosphoenolpyruvate (PEP) through direct phosphoryl transfer between the nucleoside triphosphate and OAA.</text>
</comment>
<comment type="catalytic activity">
    <reaction evidence="1">
        <text>oxaloacetate + ATP = phosphoenolpyruvate + ADP + CO2</text>
        <dbReference type="Rhea" id="RHEA:18617"/>
        <dbReference type="ChEBI" id="CHEBI:16452"/>
        <dbReference type="ChEBI" id="CHEBI:16526"/>
        <dbReference type="ChEBI" id="CHEBI:30616"/>
        <dbReference type="ChEBI" id="CHEBI:58702"/>
        <dbReference type="ChEBI" id="CHEBI:456216"/>
        <dbReference type="EC" id="4.1.1.49"/>
    </reaction>
</comment>
<comment type="cofactor">
    <cofactor evidence="1">
        <name>Mn(2+)</name>
        <dbReference type="ChEBI" id="CHEBI:29035"/>
    </cofactor>
    <text evidence="1">Binds 1 Mn(2+) ion per subunit.</text>
</comment>
<comment type="pathway">
    <text evidence="1">Carbohydrate biosynthesis; gluconeogenesis.</text>
</comment>
<comment type="subunit">
    <text evidence="1">Monomer.</text>
</comment>
<comment type="subcellular location">
    <subcellularLocation>
        <location evidence="1">Cytoplasm</location>
    </subcellularLocation>
</comment>
<comment type="similarity">
    <text evidence="1">Belongs to the phosphoenolpyruvate carboxykinase (ATP) family.</text>
</comment>
<name>PCKA_PSEPW</name>
<accession>B1JET1</accession>
<protein>
    <recommendedName>
        <fullName evidence="1">Phosphoenolpyruvate carboxykinase (ATP)</fullName>
        <shortName evidence="1">PCK</shortName>
        <shortName evidence="1">PEP carboxykinase</shortName>
        <shortName evidence="1">PEPCK</shortName>
        <ecNumber evidence="1">4.1.1.49</ecNumber>
    </recommendedName>
</protein>
<gene>
    <name evidence="1" type="primary">pckA</name>
    <name type="ordered locus">PputW619_4959</name>
</gene>
<keyword id="KW-0067">ATP-binding</keyword>
<keyword id="KW-0963">Cytoplasm</keyword>
<keyword id="KW-0210">Decarboxylase</keyword>
<keyword id="KW-0312">Gluconeogenesis</keyword>
<keyword id="KW-0456">Lyase</keyword>
<keyword id="KW-0464">Manganese</keyword>
<keyword id="KW-0479">Metal-binding</keyword>
<keyword id="KW-0547">Nucleotide-binding</keyword>
<proteinExistence type="inferred from homology"/>